<evidence type="ECO:0000255" key="1">
    <source>
        <dbReference type="HAMAP-Rule" id="MF_00696"/>
    </source>
</evidence>
<accession>B1IUA5</accession>
<dbReference type="EMBL" id="CP000946">
    <property type="protein sequence ID" value="ACA78072.1"/>
    <property type="molecule type" value="Genomic_DNA"/>
</dbReference>
<dbReference type="RefSeq" id="WP_000234823.1">
    <property type="nucleotide sequence ID" value="NZ_MTFT01000016.1"/>
</dbReference>
<dbReference type="SMR" id="B1IUA5"/>
<dbReference type="GeneID" id="93776245"/>
<dbReference type="KEGG" id="ecl:EcolC_2438"/>
<dbReference type="HOGENOM" id="CLU_017584_9_4_6"/>
<dbReference type="GO" id="GO:0005737">
    <property type="term" value="C:cytoplasm"/>
    <property type="evidence" value="ECO:0007669"/>
    <property type="project" value="UniProtKB-SubCell"/>
</dbReference>
<dbReference type="GO" id="GO:0003677">
    <property type="term" value="F:DNA binding"/>
    <property type="evidence" value="ECO:0007669"/>
    <property type="project" value="UniProtKB-KW"/>
</dbReference>
<dbReference type="GO" id="GO:0003700">
    <property type="term" value="F:DNA-binding transcription factor activity"/>
    <property type="evidence" value="ECO:0007669"/>
    <property type="project" value="UniProtKB-UniRule"/>
</dbReference>
<dbReference type="GO" id="GO:0000062">
    <property type="term" value="F:fatty-acyl-CoA binding"/>
    <property type="evidence" value="ECO:0007669"/>
    <property type="project" value="InterPro"/>
</dbReference>
<dbReference type="GO" id="GO:0006631">
    <property type="term" value="P:fatty acid metabolic process"/>
    <property type="evidence" value="ECO:0007669"/>
    <property type="project" value="UniProtKB-KW"/>
</dbReference>
<dbReference type="GO" id="GO:0019217">
    <property type="term" value="P:regulation of fatty acid metabolic process"/>
    <property type="evidence" value="ECO:0007669"/>
    <property type="project" value="UniProtKB-UniRule"/>
</dbReference>
<dbReference type="CDD" id="cd07377">
    <property type="entry name" value="WHTH_GntR"/>
    <property type="match status" value="1"/>
</dbReference>
<dbReference type="FunFam" id="1.10.10.10:FF:000036">
    <property type="entry name" value="Fatty acid metabolism regulator protein"/>
    <property type="match status" value="1"/>
</dbReference>
<dbReference type="FunFam" id="1.20.120.530:FF:000003">
    <property type="entry name" value="Fatty acid metabolism regulator protein"/>
    <property type="match status" value="1"/>
</dbReference>
<dbReference type="Gene3D" id="1.20.120.530">
    <property type="entry name" value="GntR ligand-binding domain-like"/>
    <property type="match status" value="1"/>
</dbReference>
<dbReference type="Gene3D" id="1.10.10.10">
    <property type="entry name" value="Winged helix-like DNA-binding domain superfamily/Winged helix DNA-binding domain"/>
    <property type="match status" value="1"/>
</dbReference>
<dbReference type="HAMAP" id="MF_00696">
    <property type="entry name" value="HTH_FadR"/>
    <property type="match status" value="1"/>
</dbReference>
<dbReference type="InterPro" id="IPR014178">
    <property type="entry name" value="FA-response_TF_FadR"/>
</dbReference>
<dbReference type="InterPro" id="IPR028374">
    <property type="entry name" value="FadR_C"/>
</dbReference>
<dbReference type="InterPro" id="IPR008920">
    <property type="entry name" value="TF_FadR/GntR_C"/>
</dbReference>
<dbReference type="InterPro" id="IPR000524">
    <property type="entry name" value="Tscrpt_reg_HTH_GntR"/>
</dbReference>
<dbReference type="InterPro" id="IPR036388">
    <property type="entry name" value="WH-like_DNA-bd_sf"/>
</dbReference>
<dbReference type="InterPro" id="IPR036390">
    <property type="entry name" value="WH_DNA-bd_sf"/>
</dbReference>
<dbReference type="NCBIfam" id="TIGR02812">
    <property type="entry name" value="fadR_gamma"/>
    <property type="match status" value="1"/>
</dbReference>
<dbReference type="NCBIfam" id="NF003444">
    <property type="entry name" value="PRK04984.1"/>
    <property type="match status" value="1"/>
</dbReference>
<dbReference type="PANTHER" id="PTHR43537:SF52">
    <property type="entry name" value="FATTY ACID METABOLISM REGULATOR PROTEIN"/>
    <property type="match status" value="1"/>
</dbReference>
<dbReference type="PANTHER" id="PTHR43537">
    <property type="entry name" value="TRANSCRIPTIONAL REGULATOR, GNTR FAMILY"/>
    <property type="match status" value="1"/>
</dbReference>
<dbReference type="Pfam" id="PF07840">
    <property type="entry name" value="FadR_C"/>
    <property type="match status" value="1"/>
</dbReference>
<dbReference type="Pfam" id="PF00392">
    <property type="entry name" value="GntR"/>
    <property type="match status" value="1"/>
</dbReference>
<dbReference type="PRINTS" id="PR00035">
    <property type="entry name" value="HTHGNTR"/>
</dbReference>
<dbReference type="SMART" id="SM00345">
    <property type="entry name" value="HTH_GNTR"/>
    <property type="match status" value="1"/>
</dbReference>
<dbReference type="SUPFAM" id="SSF48008">
    <property type="entry name" value="GntR ligand-binding domain-like"/>
    <property type="match status" value="1"/>
</dbReference>
<dbReference type="SUPFAM" id="SSF46785">
    <property type="entry name" value="Winged helix' DNA-binding domain"/>
    <property type="match status" value="1"/>
</dbReference>
<dbReference type="PROSITE" id="PS50949">
    <property type="entry name" value="HTH_GNTR"/>
    <property type="match status" value="1"/>
</dbReference>
<reference key="1">
    <citation type="submission" date="2008-02" db="EMBL/GenBank/DDBJ databases">
        <title>Complete sequence of Escherichia coli C str. ATCC 8739.</title>
        <authorList>
            <person name="Copeland A."/>
            <person name="Lucas S."/>
            <person name="Lapidus A."/>
            <person name="Glavina del Rio T."/>
            <person name="Dalin E."/>
            <person name="Tice H."/>
            <person name="Bruce D."/>
            <person name="Goodwin L."/>
            <person name="Pitluck S."/>
            <person name="Kiss H."/>
            <person name="Brettin T."/>
            <person name="Detter J.C."/>
            <person name="Han C."/>
            <person name="Kuske C.R."/>
            <person name="Schmutz J."/>
            <person name="Larimer F."/>
            <person name="Land M."/>
            <person name="Hauser L."/>
            <person name="Kyrpides N."/>
            <person name="Mikhailova N."/>
            <person name="Ingram L."/>
            <person name="Richardson P."/>
        </authorList>
    </citation>
    <scope>NUCLEOTIDE SEQUENCE [LARGE SCALE GENOMIC DNA]</scope>
    <source>
        <strain>ATCC 8739 / DSM 1576 / NBRC 3972 / NCIMB 8545 / WDCM 00012 / Crooks</strain>
    </source>
</reference>
<sequence>MVIKAQSPAGFAEEYIIESIWNNRFPPGTILPAERELSELIGVTRTTLREVLQRLARDGWLTIQHGKPTKVNNFWETSGLNILETLARLDHESVPQLIDNLLSVRTNISTIFIRTAFRQHPDKAQEVLATANEVADHADAFAELDYNIFRGLAFASGNPIYGLILNGMKGLYTRIGRHYFANPEARSLALGFYHKLSALCSEGAHDQVYETVRRYGHESGEIWHRMQKNLPGDLAIQGR</sequence>
<keyword id="KW-0010">Activator</keyword>
<keyword id="KW-0963">Cytoplasm</keyword>
<keyword id="KW-0238">DNA-binding</keyword>
<keyword id="KW-0276">Fatty acid metabolism</keyword>
<keyword id="KW-0443">Lipid metabolism</keyword>
<keyword id="KW-0678">Repressor</keyword>
<keyword id="KW-0804">Transcription</keyword>
<keyword id="KW-0805">Transcription regulation</keyword>
<proteinExistence type="inferred from homology"/>
<organism>
    <name type="scientific">Escherichia coli (strain ATCC 8739 / DSM 1576 / NBRC 3972 / NCIMB 8545 / WDCM 00012 / Crooks)</name>
    <dbReference type="NCBI Taxonomy" id="481805"/>
    <lineage>
        <taxon>Bacteria</taxon>
        <taxon>Pseudomonadati</taxon>
        <taxon>Pseudomonadota</taxon>
        <taxon>Gammaproteobacteria</taxon>
        <taxon>Enterobacterales</taxon>
        <taxon>Enterobacteriaceae</taxon>
        <taxon>Escherichia</taxon>
    </lineage>
</organism>
<name>FADR_ECOLC</name>
<protein>
    <recommendedName>
        <fullName evidence="1">Fatty acid metabolism regulator protein</fullName>
    </recommendedName>
</protein>
<comment type="function">
    <text evidence="1">Multifunctional regulator of fatty acid metabolism.</text>
</comment>
<comment type="subunit">
    <text evidence="1">Homodimer.</text>
</comment>
<comment type="subcellular location">
    <subcellularLocation>
        <location evidence="1">Cytoplasm</location>
    </subcellularLocation>
</comment>
<gene>
    <name evidence="1" type="primary">fadR</name>
    <name type="ordered locus">EcolC_2438</name>
</gene>
<feature type="chain" id="PRO_1000083184" description="Fatty acid metabolism regulator protein">
    <location>
        <begin position="1"/>
        <end position="239"/>
    </location>
</feature>
<feature type="domain" description="HTH gntR-type" evidence="1">
    <location>
        <begin position="6"/>
        <end position="74"/>
    </location>
</feature>
<feature type="DNA-binding region" description="H-T-H motif" evidence="1">
    <location>
        <begin position="34"/>
        <end position="53"/>
    </location>
</feature>